<evidence type="ECO:0000255" key="1">
    <source>
        <dbReference type="HAMAP-Rule" id="MF_00003"/>
    </source>
</evidence>
<accession>Q5ZRV5</accession>
<name>RBFA_LEGPH</name>
<feature type="chain" id="PRO_0000102681" description="Ribosome-binding factor A">
    <location>
        <begin position="1"/>
        <end position="123"/>
    </location>
</feature>
<sequence length="123" mass="13833">MSNNFKRTDRIAEMIQRKLALIIPQEIKDPRLKGFVTISAVKVAADLGHAKIYFTVLNEDKSVVTNILNGAASYLRSALARSITLRTVPQLHFIYDESIEYGQRLSRLIDEVNPPDSSSDDNN</sequence>
<reference key="1">
    <citation type="journal article" date="2004" name="Science">
        <title>The genomic sequence of the accidental pathogen Legionella pneumophila.</title>
        <authorList>
            <person name="Chien M."/>
            <person name="Morozova I."/>
            <person name="Shi S."/>
            <person name="Sheng H."/>
            <person name="Chen J."/>
            <person name="Gomez S.M."/>
            <person name="Asamani G."/>
            <person name="Hill K."/>
            <person name="Nuara J."/>
            <person name="Feder M."/>
            <person name="Rineer J."/>
            <person name="Greenberg J.J."/>
            <person name="Steshenko V."/>
            <person name="Park S.H."/>
            <person name="Zhao B."/>
            <person name="Teplitskaya E."/>
            <person name="Edwards J.R."/>
            <person name="Pampou S."/>
            <person name="Georghiou A."/>
            <person name="Chou I.-C."/>
            <person name="Iannuccilli W."/>
            <person name="Ulz M.E."/>
            <person name="Kim D.H."/>
            <person name="Geringer-Sameth A."/>
            <person name="Goldsberry C."/>
            <person name="Morozov P."/>
            <person name="Fischer S.G."/>
            <person name="Segal G."/>
            <person name="Qu X."/>
            <person name="Rzhetsky A."/>
            <person name="Zhang P."/>
            <person name="Cayanis E."/>
            <person name="De Jong P.J."/>
            <person name="Ju J."/>
            <person name="Kalachikov S."/>
            <person name="Shuman H.A."/>
            <person name="Russo J.J."/>
        </authorList>
    </citation>
    <scope>NUCLEOTIDE SEQUENCE [LARGE SCALE GENOMIC DNA]</scope>
    <source>
        <strain>Philadelphia 1 / ATCC 33152 / DSM 7513</strain>
    </source>
</reference>
<gene>
    <name evidence="1" type="primary">rbfA</name>
    <name type="ordered locus">lpg2771</name>
</gene>
<comment type="function">
    <text evidence="1">One of several proteins that assist in the late maturation steps of the functional core of the 30S ribosomal subunit. Associates with free 30S ribosomal subunits (but not with 30S subunits that are part of 70S ribosomes or polysomes). Required for efficient processing of 16S rRNA. May interact with the 5'-terminal helix region of 16S rRNA.</text>
</comment>
<comment type="subunit">
    <text evidence="1">Monomer. Binds 30S ribosomal subunits, but not 50S ribosomal subunits or 70S ribosomes.</text>
</comment>
<comment type="subcellular location">
    <subcellularLocation>
        <location evidence="1">Cytoplasm</location>
    </subcellularLocation>
</comment>
<comment type="similarity">
    <text evidence="1">Belongs to the RbfA family.</text>
</comment>
<proteinExistence type="inferred from homology"/>
<keyword id="KW-0963">Cytoplasm</keyword>
<keyword id="KW-1185">Reference proteome</keyword>
<keyword id="KW-0690">Ribosome biogenesis</keyword>
<protein>
    <recommendedName>
        <fullName evidence="1">Ribosome-binding factor A</fullName>
    </recommendedName>
</protein>
<dbReference type="EMBL" id="AE017354">
    <property type="protein sequence ID" value="AAU28822.1"/>
    <property type="molecule type" value="Genomic_DNA"/>
</dbReference>
<dbReference type="RefSeq" id="WP_010948461.1">
    <property type="nucleotide sequence ID" value="NC_002942.5"/>
</dbReference>
<dbReference type="RefSeq" id="YP_096769.1">
    <property type="nucleotide sequence ID" value="NC_002942.5"/>
</dbReference>
<dbReference type="SMR" id="Q5ZRV5"/>
<dbReference type="STRING" id="272624.lpg2771"/>
<dbReference type="PaxDb" id="272624-lpg2771"/>
<dbReference type="GeneID" id="57036769"/>
<dbReference type="KEGG" id="lpn:lpg2771"/>
<dbReference type="PATRIC" id="fig|272624.6.peg.2953"/>
<dbReference type="eggNOG" id="COG0858">
    <property type="taxonomic scope" value="Bacteria"/>
</dbReference>
<dbReference type="HOGENOM" id="CLU_089475_5_0_6"/>
<dbReference type="OrthoDB" id="307788at2"/>
<dbReference type="Proteomes" id="UP000000609">
    <property type="component" value="Chromosome"/>
</dbReference>
<dbReference type="GO" id="GO:0005829">
    <property type="term" value="C:cytosol"/>
    <property type="evidence" value="ECO:0007669"/>
    <property type="project" value="TreeGrafter"/>
</dbReference>
<dbReference type="GO" id="GO:0043024">
    <property type="term" value="F:ribosomal small subunit binding"/>
    <property type="evidence" value="ECO:0007669"/>
    <property type="project" value="TreeGrafter"/>
</dbReference>
<dbReference type="GO" id="GO:0030490">
    <property type="term" value="P:maturation of SSU-rRNA"/>
    <property type="evidence" value="ECO:0007669"/>
    <property type="project" value="UniProtKB-UniRule"/>
</dbReference>
<dbReference type="Gene3D" id="3.30.300.20">
    <property type="match status" value="1"/>
</dbReference>
<dbReference type="HAMAP" id="MF_00003">
    <property type="entry name" value="RbfA"/>
    <property type="match status" value="1"/>
</dbReference>
<dbReference type="InterPro" id="IPR015946">
    <property type="entry name" value="KH_dom-like_a/b"/>
</dbReference>
<dbReference type="InterPro" id="IPR000238">
    <property type="entry name" value="RbfA"/>
</dbReference>
<dbReference type="InterPro" id="IPR023799">
    <property type="entry name" value="RbfA_dom_sf"/>
</dbReference>
<dbReference type="InterPro" id="IPR020053">
    <property type="entry name" value="Ribosome-bd_factorA_CS"/>
</dbReference>
<dbReference type="NCBIfam" id="TIGR00082">
    <property type="entry name" value="rbfA"/>
    <property type="match status" value="1"/>
</dbReference>
<dbReference type="PANTHER" id="PTHR33515">
    <property type="entry name" value="RIBOSOME-BINDING FACTOR A, CHLOROPLASTIC-RELATED"/>
    <property type="match status" value="1"/>
</dbReference>
<dbReference type="PANTHER" id="PTHR33515:SF1">
    <property type="entry name" value="RIBOSOME-BINDING FACTOR A, CHLOROPLASTIC-RELATED"/>
    <property type="match status" value="1"/>
</dbReference>
<dbReference type="Pfam" id="PF02033">
    <property type="entry name" value="RBFA"/>
    <property type="match status" value="1"/>
</dbReference>
<dbReference type="SUPFAM" id="SSF89919">
    <property type="entry name" value="Ribosome-binding factor A, RbfA"/>
    <property type="match status" value="1"/>
</dbReference>
<dbReference type="PROSITE" id="PS01319">
    <property type="entry name" value="RBFA"/>
    <property type="match status" value="1"/>
</dbReference>
<organism>
    <name type="scientific">Legionella pneumophila subsp. pneumophila (strain Philadelphia 1 / ATCC 33152 / DSM 7513)</name>
    <dbReference type="NCBI Taxonomy" id="272624"/>
    <lineage>
        <taxon>Bacteria</taxon>
        <taxon>Pseudomonadati</taxon>
        <taxon>Pseudomonadota</taxon>
        <taxon>Gammaproteobacteria</taxon>
        <taxon>Legionellales</taxon>
        <taxon>Legionellaceae</taxon>
        <taxon>Legionella</taxon>
    </lineage>
</organism>